<gene>
    <name evidence="1" type="primary">glmU</name>
    <name type="ordered locus">NT01CX_1014</name>
</gene>
<reference key="1">
    <citation type="journal article" date="2006" name="Nat. Biotechnol.">
        <title>The genome and transcriptomes of the anti-tumor agent Clostridium novyi-NT.</title>
        <authorList>
            <person name="Bettegowda C."/>
            <person name="Huang X."/>
            <person name="Lin J."/>
            <person name="Cheong I."/>
            <person name="Kohli M."/>
            <person name="Szabo S.A."/>
            <person name="Zhang X."/>
            <person name="Diaz L.A. Jr."/>
            <person name="Velculescu V.E."/>
            <person name="Parmigiani G."/>
            <person name="Kinzler K.W."/>
            <person name="Vogelstein B."/>
            <person name="Zhou S."/>
        </authorList>
    </citation>
    <scope>NUCLEOTIDE SEQUENCE [LARGE SCALE GENOMIC DNA]</scope>
    <source>
        <strain>NT</strain>
    </source>
</reference>
<sequence>MYKSAVILAAGKGTRMKSALPKVLHKVCGKEMVNQVIDTLRKSDIEDIDLVIGNGAEEVKKATKDTHVLYSIQEEQLGTGHALMCAREFLEGKDGVVAVFTGDAPLITSETVKDCIEFHNKGEYKATILTAIVGNPFGYGRIIRDENGEVKKIVEHKDCTPEELKVNEINSGMYCFDIKELLNNLDKLNNNNSQGEYYLTDIIELLKEKGCKVGAISVNPDEIKGVNSRGQLAEAEEILRLRINERHMENGVTLIDPKNTYIGTDVEIEEDTIVYPGNVLEGKTVIKKGCVLYPNSRIKDSVIESGVEIQSSVILESHVGKNTTVGPFAYIRPESKIGEGARIGDFVEIKKSTIGNGTKVSHLTYIGDAEVGGGCNFGCGTVVVNYDGKTKNKTIIGDNSFIGCNTNLVSPVEVEDNTYIAAGSTITKKVQEGDLAIARAKQVNIKGWVAKKGLKK</sequence>
<evidence type="ECO:0000255" key="1">
    <source>
        <dbReference type="HAMAP-Rule" id="MF_01631"/>
    </source>
</evidence>
<evidence type="ECO:0000305" key="2"/>
<keyword id="KW-0012">Acyltransferase</keyword>
<keyword id="KW-0133">Cell shape</keyword>
<keyword id="KW-0961">Cell wall biogenesis/degradation</keyword>
<keyword id="KW-0963">Cytoplasm</keyword>
<keyword id="KW-0460">Magnesium</keyword>
<keyword id="KW-0479">Metal-binding</keyword>
<keyword id="KW-0511">Multifunctional enzyme</keyword>
<keyword id="KW-0548">Nucleotidyltransferase</keyword>
<keyword id="KW-0573">Peptidoglycan synthesis</keyword>
<keyword id="KW-1185">Reference proteome</keyword>
<keyword id="KW-0677">Repeat</keyword>
<keyword id="KW-0808">Transferase</keyword>
<comment type="function">
    <text evidence="1">Catalyzes the last two sequential reactions in the de novo biosynthetic pathway for UDP-N-acetylglucosamine (UDP-GlcNAc). The C-terminal domain catalyzes the transfer of acetyl group from acetyl coenzyme A to glucosamine-1-phosphate (GlcN-1-P) to produce N-acetylglucosamine-1-phosphate (GlcNAc-1-P), which is converted into UDP-GlcNAc by the transfer of uridine 5-monophosphate (from uridine 5-triphosphate), a reaction catalyzed by the N-terminal domain.</text>
</comment>
<comment type="catalytic activity">
    <reaction evidence="1">
        <text>alpha-D-glucosamine 1-phosphate + acetyl-CoA = N-acetyl-alpha-D-glucosamine 1-phosphate + CoA + H(+)</text>
        <dbReference type="Rhea" id="RHEA:13725"/>
        <dbReference type="ChEBI" id="CHEBI:15378"/>
        <dbReference type="ChEBI" id="CHEBI:57287"/>
        <dbReference type="ChEBI" id="CHEBI:57288"/>
        <dbReference type="ChEBI" id="CHEBI:57776"/>
        <dbReference type="ChEBI" id="CHEBI:58516"/>
        <dbReference type="EC" id="2.3.1.157"/>
    </reaction>
</comment>
<comment type="catalytic activity">
    <reaction evidence="1">
        <text>N-acetyl-alpha-D-glucosamine 1-phosphate + UTP + H(+) = UDP-N-acetyl-alpha-D-glucosamine + diphosphate</text>
        <dbReference type="Rhea" id="RHEA:13509"/>
        <dbReference type="ChEBI" id="CHEBI:15378"/>
        <dbReference type="ChEBI" id="CHEBI:33019"/>
        <dbReference type="ChEBI" id="CHEBI:46398"/>
        <dbReference type="ChEBI" id="CHEBI:57705"/>
        <dbReference type="ChEBI" id="CHEBI:57776"/>
        <dbReference type="EC" id="2.7.7.23"/>
    </reaction>
</comment>
<comment type="cofactor">
    <cofactor evidence="1">
        <name>Mg(2+)</name>
        <dbReference type="ChEBI" id="CHEBI:18420"/>
    </cofactor>
    <text evidence="1">Binds 1 Mg(2+) ion per subunit.</text>
</comment>
<comment type="pathway">
    <text evidence="1">Nucleotide-sugar biosynthesis; UDP-N-acetyl-alpha-D-glucosamine biosynthesis; N-acetyl-alpha-D-glucosamine 1-phosphate from alpha-D-glucosamine 6-phosphate (route II): step 2/2.</text>
</comment>
<comment type="pathway">
    <text evidence="1">Nucleotide-sugar biosynthesis; UDP-N-acetyl-alpha-D-glucosamine biosynthesis; UDP-N-acetyl-alpha-D-glucosamine from N-acetyl-alpha-D-glucosamine 1-phosphate: step 1/1.</text>
</comment>
<comment type="pathway">
    <text evidence="1">Bacterial outer membrane biogenesis; LPS lipid A biosynthesis.</text>
</comment>
<comment type="subunit">
    <text evidence="1">Homotrimer.</text>
</comment>
<comment type="subcellular location">
    <subcellularLocation>
        <location evidence="1">Cytoplasm</location>
    </subcellularLocation>
</comment>
<comment type="similarity">
    <text evidence="1">In the N-terminal section; belongs to the N-acetylglucosamine-1-phosphate uridyltransferase family.</text>
</comment>
<comment type="similarity">
    <text evidence="1">In the C-terminal section; belongs to the transferase hexapeptide repeat family.</text>
</comment>
<comment type="sequence caution" evidence="2">
    <conflict type="erroneous initiation">
        <sequence resource="EMBL-CDS" id="ABK62129"/>
    </conflict>
</comment>
<organism>
    <name type="scientific">Clostridium novyi (strain NT)</name>
    <dbReference type="NCBI Taxonomy" id="386415"/>
    <lineage>
        <taxon>Bacteria</taxon>
        <taxon>Bacillati</taxon>
        <taxon>Bacillota</taxon>
        <taxon>Clostridia</taxon>
        <taxon>Eubacteriales</taxon>
        <taxon>Clostridiaceae</taxon>
        <taxon>Clostridium</taxon>
    </lineage>
</organism>
<name>GLMU_CLONN</name>
<proteinExistence type="inferred from homology"/>
<feature type="chain" id="PRO_0000337717" description="Bifunctional protein GlmU">
    <location>
        <begin position="1"/>
        <end position="456"/>
    </location>
</feature>
<feature type="region of interest" description="Pyrophosphorylase" evidence="1">
    <location>
        <begin position="1"/>
        <end position="229"/>
    </location>
</feature>
<feature type="region of interest" description="Linker" evidence="1">
    <location>
        <begin position="230"/>
        <end position="250"/>
    </location>
</feature>
<feature type="region of interest" description="N-acetyltransferase" evidence="1">
    <location>
        <begin position="251"/>
        <end position="456"/>
    </location>
</feature>
<feature type="active site" description="Proton acceptor" evidence="1">
    <location>
        <position position="362"/>
    </location>
</feature>
<feature type="binding site" evidence="1">
    <location>
        <begin position="8"/>
        <end position="11"/>
    </location>
    <ligand>
        <name>UDP-N-acetyl-alpha-D-glucosamine</name>
        <dbReference type="ChEBI" id="CHEBI:57705"/>
    </ligand>
</feature>
<feature type="binding site" evidence="1">
    <location>
        <position position="22"/>
    </location>
    <ligand>
        <name>UDP-N-acetyl-alpha-D-glucosamine</name>
        <dbReference type="ChEBI" id="CHEBI:57705"/>
    </ligand>
</feature>
<feature type="binding site" evidence="1">
    <location>
        <position position="73"/>
    </location>
    <ligand>
        <name>UDP-N-acetyl-alpha-D-glucosamine</name>
        <dbReference type="ChEBI" id="CHEBI:57705"/>
    </ligand>
</feature>
<feature type="binding site" evidence="1">
    <location>
        <begin position="78"/>
        <end position="79"/>
    </location>
    <ligand>
        <name>UDP-N-acetyl-alpha-D-glucosamine</name>
        <dbReference type="ChEBI" id="CHEBI:57705"/>
    </ligand>
</feature>
<feature type="binding site" evidence="1">
    <location>
        <position position="103"/>
    </location>
    <ligand>
        <name>Mg(2+)</name>
        <dbReference type="ChEBI" id="CHEBI:18420"/>
    </ligand>
</feature>
<feature type="binding site" evidence="1">
    <location>
        <position position="140"/>
    </location>
    <ligand>
        <name>UDP-N-acetyl-alpha-D-glucosamine</name>
        <dbReference type="ChEBI" id="CHEBI:57705"/>
    </ligand>
</feature>
<feature type="binding site" evidence="1">
    <location>
        <position position="155"/>
    </location>
    <ligand>
        <name>UDP-N-acetyl-alpha-D-glucosamine</name>
        <dbReference type="ChEBI" id="CHEBI:57705"/>
    </ligand>
</feature>
<feature type="binding site" evidence="1">
    <location>
        <position position="170"/>
    </location>
    <ligand>
        <name>UDP-N-acetyl-alpha-D-glucosamine</name>
        <dbReference type="ChEBI" id="CHEBI:57705"/>
    </ligand>
</feature>
<feature type="binding site" evidence="1">
    <location>
        <position position="227"/>
    </location>
    <ligand>
        <name>Mg(2+)</name>
        <dbReference type="ChEBI" id="CHEBI:18420"/>
    </ligand>
</feature>
<feature type="binding site" evidence="1">
    <location>
        <position position="227"/>
    </location>
    <ligand>
        <name>UDP-N-acetyl-alpha-D-glucosamine</name>
        <dbReference type="ChEBI" id="CHEBI:57705"/>
    </ligand>
</feature>
<feature type="binding site" evidence="1">
    <location>
        <position position="332"/>
    </location>
    <ligand>
        <name>UDP-N-acetyl-alpha-D-glucosamine</name>
        <dbReference type="ChEBI" id="CHEBI:57705"/>
    </ligand>
</feature>
<feature type="binding site" evidence="1">
    <location>
        <position position="350"/>
    </location>
    <ligand>
        <name>UDP-N-acetyl-alpha-D-glucosamine</name>
        <dbReference type="ChEBI" id="CHEBI:57705"/>
    </ligand>
</feature>
<feature type="binding site" evidence="1">
    <location>
        <position position="365"/>
    </location>
    <ligand>
        <name>UDP-N-acetyl-alpha-D-glucosamine</name>
        <dbReference type="ChEBI" id="CHEBI:57705"/>
    </ligand>
</feature>
<feature type="binding site" evidence="1">
    <location>
        <position position="376"/>
    </location>
    <ligand>
        <name>UDP-N-acetyl-alpha-D-glucosamine</name>
        <dbReference type="ChEBI" id="CHEBI:57705"/>
    </ligand>
</feature>
<feature type="binding site" evidence="1">
    <location>
        <begin position="385"/>
        <end position="386"/>
    </location>
    <ligand>
        <name>acetyl-CoA</name>
        <dbReference type="ChEBI" id="CHEBI:57288"/>
    </ligand>
</feature>
<feature type="binding site" evidence="1">
    <location>
        <position position="422"/>
    </location>
    <ligand>
        <name>acetyl-CoA</name>
        <dbReference type="ChEBI" id="CHEBI:57288"/>
    </ligand>
</feature>
<feature type="binding site" evidence="1">
    <location>
        <position position="439"/>
    </location>
    <ligand>
        <name>acetyl-CoA</name>
        <dbReference type="ChEBI" id="CHEBI:57288"/>
    </ligand>
</feature>
<protein>
    <recommendedName>
        <fullName evidence="1">Bifunctional protein GlmU</fullName>
    </recommendedName>
    <domain>
        <recommendedName>
            <fullName evidence="1">UDP-N-acetylglucosamine pyrophosphorylase</fullName>
            <ecNumber evidence="1">2.7.7.23</ecNumber>
        </recommendedName>
        <alternativeName>
            <fullName evidence="1">N-acetylglucosamine-1-phosphate uridyltransferase</fullName>
        </alternativeName>
    </domain>
    <domain>
        <recommendedName>
            <fullName evidence="1">Glucosamine-1-phosphate N-acetyltransferase</fullName>
            <ecNumber evidence="1">2.3.1.157</ecNumber>
        </recommendedName>
    </domain>
</protein>
<accession>A0PXK8</accession>
<dbReference type="EC" id="2.7.7.23" evidence="1"/>
<dbReference type="EC" id="2.3.1.157" evidence="1"/>
<dbReference type="EMBL" id="CP000382">
    <property type="protein sequence ID" value="ABK62129.1"/>
    <property type="status" value="ALT_INIT"/>
    <property type="molecule type" value="Genomic_DNA"/>
</dbReference>
<dbReference type="RefSeq" id="WP_039224383.1">
    <property type="nucleotide sequence ID" value="NC_008593.1"/>
</dbReference>
<dbReference type="SMR" id="A0PXK8"/>
<dbReference type="STRING" id="386415.NT01CX_1014"/>
<dbReference type="KEGG" id="cno:NT01CX_1014"/>
<dbReference type="eggNOG" id="COG1207">
    <property type="taxonomic scope" value="Bacteria"/>
</dbReference>
<dbReference type="HOGENOM" id="CLU_029499_15_2_9"/>
<dbReference type="UniPathway" id="UPA00113">
    <property type="reaction ID" value="UER00532"/>
</dbReference>
<dbReference type="UniPathway" id="UPA00113">
    <property type="reaction ID" value="UER00533"/>
</dbReference>
<dbReference type="UniPathway" id="UPA00973"/>
<dbReference type="Proteomes" id="UP000008220">
    <property type="component" value="Chromosome"/>
</dbReference>
<dbReference type="GO" id="GO:0005737">
    <property type="term" value="C:cytoplasm"/>
    <property type="evidence" value="ECO:0007669"/>
    <property type="project" value="UniProtKB-SubCell"/>
</dbReference>
<dbReference type="GO" id="GO:0016020">
    <property type="term" value="C:membrane"/>
    <property type="evidence" value="ECO:0007669"/>
    <property type="project" value="GOC"/>
</dbReference>
<dbReference type="GO" id="GO:0019134">
    <property type="term" value="F:glucosamine-1-phosphate N-acetyltransferase activity"/>
    <property type="evidence" value="ECO:0007669"/>
    <property type="project" value="UniProtKB-UniRule"/>
</dbReference>
<dbReference type="GO" id="GO:0000287">
    <property type="term" value="F:magnesium ion binding"/>
    <property type="evidence" value="ECO:0007669"/>
    <property type="project" value="UniProtKB-UniRule"/>
</dbReference>
<dbReference type="GO" id="GO:0003977">
    <property type="term" value="F:UDP-N-acetylglucosamine diphosphorylase activity"/>
    <property type="evidence" value="ECO:0007669"/>
    <property type="project" value="UniProtKB-UniRule"/>
</dbReference>
<dbReference type="GO" id="GO:0000902">
    <property type="term" value="P:cell morphogenesis"/>
    <property type="evidence" value="ECO:0007669"/>
    <property type="project" value="UniProtKB-UniRule"/>
</dbReference>
<dbReference type="GO" id="GO:0071555">
    <property type="term" value="P:cell wall organization"/>
    <property type="evidence" value="ECO:0007669"/>
    <property type="project" value="UniProtKB-KW"/>
</dbReference>
<dbReference type="GO" id="GO:0009245">
    <property type="term" value="P:lipid A biosynthetic process"/>
    <property type="evidence" value="ECO:0007669"/>
    <property type="project" value="UniProtKB-UniRule"/>
</dbReference>
<dbReference type="GO" id="GO:0009252">
    <property type="term" value="P:peptidoglycan biosynthetic process"/>
    <property type="evidence" value="ECO:0007669"/>
    <property type="project" value="UniProtKB-UniRule"/>
</dbReference>
<dbReference type="GO" id="GO:0008360">
    <property type="term" value="P:regulation of cell shape"/>
    <property type="evidence" value="ECO:0007669"/>
    <property type="project" value="UniProtKB-KW"/>
</dbReference>
<dbReference type="GO" id="GO:0006048">
    <property type="term" value="P:UDP-N-acetylglucosamine biosynthetic process"/>
    <property type="evidence" value="ECO:0007669"/>
    <property type="project" value="UniProtKB-UniPathway"/>
</dbReference>
<dbReference type="CDD" id="cd02540">
    <property type="entry name" value="GT2_GlmU_N_bac"/>
    <property type="match status" value="1"/>
</dbReference>
<dbReference type="CDD" id="cd03353">
    <property type="entry name" value="LbH_GlmU_C"/>
    <property type="match status" value="1"/>
</dbReference>
<dbReference type="Gene3D" id="2.160.10.10">
    <property type="entry name" value="Hexapeptide repeat proteins"/>
    <property type="match status" value="1"/>
</dbReference>
<dbReference type="Gene3D" id="3.90.550.10">
    <property type="entry name" value="Spore Coat Polysaccharide Biosynthesis Protein SpsA, Chain A"/>
    <property type="match status" value="1"/>
</dbReference>
<dbReference type="HAMAP" id="MF_01631">
    <property type="entry name" value="GlmU"/>
    <property type="match status" value="1"/>
</dbReference>
<dbReference type="InterPro" id="IPR005882">
    <property type="entry name" value="Bifunctional_GlmU"/>
</dbReference>
<dbReference type="InterPro" id="IPR050065">
    <property type="entry name" value="GlmU-like"/>
</dbReference>
<dbReference type="InterPro" id="IPR038009">
    <property type="entry name" value="GlmU_C_LbH"/>
</dbReference>
<dbReference type="InterPro" id="IPR001451">
    <property type="entry name" value="Hexapep"/>
</dbReference>
<dbReference type="InterPro" id="IPR018357">
    <property type="entry name" value="Hexapep_transf_CS"/>
</dbReference>
<dbReference type="InterPro" id="IPR005835">
    <property type="entry name" value="NTP_transferase_dom"/>
</dbReference>
<dbReference type="InterPro" id="IPR029044">
    <property type="entry name" value="Nucleotide-diphossugar_trans"/>
</dbReference>
<dbReference type="InterPro" id="IPR011004">
    <property type="entry name" value="Trimer_LpxA-like_sf"/>
</dbReference>
<dbReference type="NCBIfam" id="TIGR01173">
    <property type="entry name" value="glmU"/>
    <property type="match status" value="1"/>
</dbReference>
<dbReference type="NCBIfam" id="NF010934">
    <property type="entry name" value="PRK14354.1"/>
    <property type="match status" value="1"/>
</dbReference>
<dbReference type="PANTHER" id="PTHR43584:SF3">
    <property type="entry name" value="BIFUNCTIONAL PROTEIN GLMU"/>
    <property type="match status" value="1"/>
</dbReference>
<dbReference type="PANTHER" id="PTHR43584">
    <property type="entry name" value="NUCLEOTIDYL TRANSFERASE"/>
    <property type="match status" value="1"/>
</dbReference>
<dbReference type="Pfam" id="PF00132">
    <property type="entry name" value="Hexapep"/>
    <property type="match status" value="2"/>
</dbReference>
<dbReference type="Pfam" id="PF00483">
    <property type="entry name" value="NTP_transferase"/>
    <property type="match status" value="1"/>
</dbReference>
<dbReference type="SUPFAM" id="SSF53448">
    <property type="entry name" value="Nucleotide-diphospho-sugar transferases"/>
    <property type="match status" value="1"/>
</dbReference>
<dbReference type="SUPFAM" id="SSF51161">
    <property type="entry name" value="Trimeric LpxA-like enzymes"/>
    <property type="match status" value="1"/>
</dbReference>
<dbReference type="PROSITE" id="PS00101">
    <property type="entry name" value="HEXAPEP_TRANSFERASES"/>
    <property type="match status" value="1"/>
</dbReference>